<protein>
    <recommendedName>
        <fullName>Probable Xaa-Pro aminopeptidase P</fullName>
        <shortName>AMPP</shortName>
        <shortName>Aminopeptidase P</shortName>
        <ecNumber>3.4.11.9</ecNumber>
    </recommendedName>
    <alternativeName>
        <fullName>Aminoacylproline aminopeptidase</fullName>
    </alternativeName>
    <alternativeName>
        <fullName>Prolidase</fullName>
    </alternativeName>
</protein>
<gene>
    <name type="primary">AMPP</name>
    <name type="ORF">MAC_06460</name>
</gene>
<organism>
    <name type="scientific">Metarhizium acridum (strain CQMa 102)</name>
    <dbReference type="NCBI Taxonomy" id="655827"/>
    <lineage>
        <taxon>Eukaryota</taxon>
        <taxon>Fungi</taxon>
        <taxon>Dikarya</taxon>
        <taxon>Ascomycota</taxon>
        <taxon>Pezizomycotina</taxon>
        <taxon>Sordariomycetes</taxon>
        <taxon>Hypocreomycetidae</taxon>
        <taxon>Hypocreales</taxon>
        <taxon>Clavicipitaceae</taxon>
        <taxon>Metarhizium</taxon>
    </lineage>
</organism>
<proteinExistence type="inferred from homology"/>
<dbReference type="EC" id="3.4.11.9"/>
<dbReference type="EMBL" id="GL698526">
    <property type="protein sequence ID" value="EFY87483.1"/>
    <property type="molecule type" value="Genomic_DNA"/>
</dbReference>
<dbReference type="RefSeq" id="XP_007812800.1">
    <property type="nucleotide sequence ID" value="XM_007814609.1"/>
</dbReference>
<dbReference type="SMR" id="E9E9B2"/>
<dbReference type="FunCoup" id="E9E9B2">
    <property type="interactions" value="383"/>
</dbReference>
<dbReference type="STRING" id="655827.E9E9B2"/>
<dbReference type="eggNOG" id="KOG2413">
    <property type="taxonomic scope" value="Eukaryota"/>
</dbReference>
<dbReference type="HOGENOM" id="CLU_011781_2_3_1"/>
<dbReference type="InParanoid" id="E9E9B2"/>
<dbReference type="OMA" id="EPGMILS"/>
<dbReference type="OrthoDB" id="9995434at2759"/>
<dbReference type="Proteomes" id="UP000002499">
    <property type="component" value="Unassembled WGS sequence"/>
</dbReference>
<dbReference type="GO" id="GO:0005737">
    <property type="term" value="C:cytoplasm"/>
    <property type="evidence" value="ECO:0007669"/>
    <property type="project" value="UniProtKB-ARBA"/>
</dbReference>
<dbReference type="GO" id="GO:0046872">
    <property type="term" value="F:metal ion binding"/>
    <property type="evidence" value="ECO:0007669"/>
    <property type="project" value="UniProtKB-KW"/>
</dbReference>
<dbReference type="GO" id="GO:0070006">
    <property type="term" value="F:metalloaminopeptidase activity"/>
    <property type="evidence" value="ECO:0007669"/>
    <property type="project" value="InterPro"/>
</dbReference>
<dbReference type="GO" id="GO:0006508">
    <property type="term" value="P:proteolysis"/>
    <property type="evidence" value="ECO:0007669"/>
    <property type="project" value="UniProtKB-KW"/>
</dbReference>
<dbReference type="CDD" id="cd01085">
    <property type="entry name" value="APP"/>
    <property type="match status" value="1"/>
</dbReference>
<dbReference type="FunFam" id="3.40.350.10:FF:000010">
    <property type="entry name" value="Probable Xaa-Pro aminopeptidase P"/>
    <property type="match status" value="1"/>
</dbReference>
<dbReference type="FunFam" id="3.90.230.10:FF:000007">
    <property type="entry name" value="Xaa-Pro aminopeptidase P"/>
    <property type="match status" value="1"/>
</dbReference>
<dbReference type="FunFam" id="3.40.350.10:FF:000003">
    <property type="entry name" value="Xaa-pro aminopeptidase P"/>
    <property type="match status" value="1"/>
</dbReference>
<dbReference type="Gene3D" id="3.90.230.10">
    <property type="entry name" value="Creatinase/methionine aminopeptidase superfamily"/>
    <property type="match status" value="1"/>
</dbReference>
<dbReference type="Gene3D" id="3.40.350.10">
    <property type="entry name" value="Creatinase/prolidase N-terminal domain"/>
    <property type="match status" value="2"/>
</dbReference>
<dbReference type="InterPro" id="IPR029149">
    <property type="entry name" value="Creatin/AminoP/Spt16_N"/>
</dbReference>
<dbReference type="InterPro" id="IPR036005">
    <property type="entry name" value="Creatinase/aminopeptidase-like"/>
</dbReference>
<dbReference type="InterPro" id="IPR000587">
    <property type="entry name" value="Creatinase_N"/>
</dbReference>
<dbReference type="InterPro" id="IPR000994">
    <property type="entry name" value="Pept_M24"/>
</dbReference>
<dbReference type="InterPro" id="IPR033740">
    <property type="entry name" value="Pept_M24B"/>
</dbReference>
<dbReference type="InterPro" id="IPR032416">
    <property type="entry name" value="Peptidase_M24_C"/>
</dbReference>
<dbReference type="InterPro" id="IPR001131">
    <property type="entry name" value="Peptidase_M24B_aminopep-P_CS"/>
</dbReference>
<dbReference type="InterPro" id="IPR050422">
    <property type="entry name" value="X-Pro_aminopeptidase_P"/>
</dbReference>
<dbReference type="PANTHER" id="PTHR43763">
    <property type="entry name" value="XAA-PRO AMINOPEPTIDASE 1"/>
    <property type="match status" value="1"/>
</dbReference>
<dbReference type="PANTHER" id="PTHR43763:SF6">
    <property type="entry name" value="XAA-PRO AMINOPEPTIDASE 1"/>
    <property type="match status" value="1"/>
</dbReference>
<dbReference type="Pfam" id="PF01321">
    <property type="entry name" value="Creatinase_N"/>
    <property type="match status" value="1"/>
</dbReference>
<dbReference type="Pfam" id="PF16189">
    <property type="entry name" value="Creatinase_N_2"/>
    <property type="match status" value="1"/>
</dbReference>
<dbReference type="Pfam" id="PF00557">
    <property type="entry name" value="Peptidase_M24"/>
    <property type="match status" value="1"/>
</dbReference>
<dbReference type="Pfam" id="PF16188">
    <property type="entry name" value="Peptidase_M24_C"/>
    <property type="match status" value="1"/>
</dbReference>
<dbReference type="SUPFAM" id="SSF55920">
    <property type="entry name" value="Creatinase/aminopeptidase"/>
    <property type="match status" value="1"/>
</dbReference>
<dbReference type="SUPFAM" id="SSF53092">
    <property type="entry name" value="Creatinase/prolidase N-terminal domain"/>
    <property type="match status" value="1"/>
</dbReference>
<dbReference type="PROSITE" id="PS00491">
    <property type="entry name" value="PROLINE_PEPTIDASE"/>
    <property type="match status" value="1"/>
</dbReference>
<comment type="function">
    <text evidence="1">Catalyzes the removal of a penultimate prolyl residue from the N-termini of peptides.</text>
</comment>
<comment type="catalytic activity">
    <reaction>
        <text>Release of any N-terminal amino acid, including proline, that is linked to proline, even from a dipeptide or tripeptide.</text>
        <dbReference type="EC" id="3.4.11.9"/>
    </reaction>
</comment>
<comment type="cofactor">
    <cofactor evidence="1">
        <name>Mn(2+)</name>
        <dbReference type="ChEBI" id="CHEBI:29035"/>
    </cofactor>
    <text evidence="1">Binds 2 manganese ions per subunit.</text>
</comment>
<comment type="similarity">
    <text evidence="2">Belongs to the peptidase M24B family.</text>
</comment>
<sequence>MADSSPQLAKLRSLMKERKVHVYVIPSEDSHSSEYIAACDARREFISGFTGSAGCAIVTLEAAALATDGRYFNQAAKQLDGNWTLLKQGLQDVPTWQEWAASQSAGGKIVAVDPSLLPGSAAKKLNDQVRKAGGADLVPLDENIVDIAWGDSRPERPCQPVSVLPDELAGKPVATKIEELRQELAKKNCPGFFVSMLDEVAWLFNLRGSDIPYNPVFFSYATITPETAILYVDESKLDDSCRAHLRENNVQVKPYDSFLPDARHLHTEVKTKRQAGGDGVVIGNFLISNKASWAMSRALGGDGSVEEMRSPVGDAKAVKNETEMNGMRACHVRDGAALIEFFAWLEDQLVDKKIMIDEVQAADKLEQLRSKQQHFVGLSFPTISSTGANAAIIHYGPEKGSCATIDAGSVYLCDSGAQYRDGTTDTTRTLHFGKPSDAEKKAYTLVLKGLIGLDTAVFPKGTTGFALDCLARQHLWKNGLDYRHGTGHGVGSYLNVHEGPIGIGTRVQYTEVPLAPGNVLSNEPGYYEDGNFGIRIENIMMVREVQTEHCFGDKSYLGFEHVTMVPYCQSLIERDMLTADEKAWLNAYNDEVLKNTRGFFEGDDLTMSWLTRETRPVE</sequence>
<accession>E9E9B2</accession>
<reference key="1">
    <citation type="journal article" date="2011" name="PLoS Genet.">
        <title>Genome sequencing and comparative transcriptomics of the model entomopathogenic fungi Metarhizium anisopliae and M. acridum.</title>
        <authorList>
            <person name="Gao Q."/>
            <person name="Jin K."/>
            <person name="Ying S.-H."/>
            <person name="Zhang Y."/>
            <person name="Xiao G."/>
            <person name="Shang Y."/>
            <person name="Duan Z."/>
            <person name="Hu X."/>
            <person name="Xie X.-Q."/>
            <person name="Zhou G."/>
            <person name="Peng G."/>
            <person name="Luo Z."/>
            <person name="Huang W."/>
            <person name="Wang B."/>
            <person name="Fang W."/>
            <person name="Wang S."/>
            <person name="Zhong Y."/>
            <person name="Ma L.-J."/>
            <person name="St Leger R.J."/>
            <person name="Zhao G.-P."/>
            <person name="Pei Y."/>
            <person name="Feng M.-G."/>
            <person name="Xia Y."/>
            <person name="Wang C."/>
        </authorList>
    </citation>
    <scope>NUCLEOTIDE SEQUENCE [LARGE SCALE GENOMIC DNA]</scope>
    <source>
        <strain>CQMa 102</strain>
    </source>
</reference>
<evidence type="ECO:0000250" key="1"/>
<evidence type="ECO:0000305" key="2"/>
<name>AMPP1_METAQ</name>
<feature type="chain" id="PRO_0000411795" description="Probable Xaa-Pro aminopeptidase P">
    <location>
        <begin position="1"/>
        <end position="618"/>
    </location>
</feature>
<feature type="binding site" evidence="1">
    <location>
        <position position="414"/>
    </location>
    <ligand>
        <name>Mn(2+)</name>
        <dbReference type="ChEBI" id="CHEBI:29035"/>
        <label>2</label>
    </ligand>
</feature>
<feature type="binding site" evidence="1">
    <location>
        <position position="425"/>
    </location>
    <ligand>
        <name>Mn(2+)</name>
        <dbReference type="ChEBI" id="CHEBI:29035"/>
        <label>1</label>
    </ligand>
</feature>
<feature type="binding site" evidence="1">
    <location>
        <position position="425"/>
    </location>
    <ligand>
        <name>Mn(2+)</name>
        <dbReference type="ChEBI" id="CHEBI:29035"/>
        <label>2</label>
    </ligand>
</feature>
<feature type="binding site" evidence="1">
    <location>
        <position position="523"/>
    </location>
    <ligand>
        <name>Mn(2+)</name>
        <dbReference type="ChEBI" id="CHEBI:29035"/>
        <label>1</label>
    </ligand>
</feature>
<feature type="binding site" evidence="1">
    <location>
        <position position="537"/>
    </location>
    <ligand>
        <name>Mn(2+)</name>
        <dbReference type="ChEBI" id="CHEBI:29035"/>
        <label>1</label>
    </ligand>
</feature>
<feature type="binding site" evidence="1">
    <location>
        <position position="537"/>
    </location>
    <ligand>
        <name>Mn(2+)</name>
        <dbReference type="ChEBI" id="CHEBI:29035"/>
        <label>2</label>
    </ligand>
</feature>
<keyword id="KW-0031">Aminopeptidase</keyword>
<keyword id="KW-0378">Hydrolase</keyword>
<keyword id="KW-0464">Manganese</keyword>
<keyword id="KW-0479">Metal-binding</keyword>
<keyword id="KW-0482">Metalloprotease</keyword>
<keyword id="KW-0645">Protease</keyword>
<keyword id="KW-1185">Reference proteome</keyword>